<keyword id="KW-0256">Endoplasmic reticulum</keyword>
<keyword id="KW-0325">Glycoprotein</keyword>
<keyword id="KW-0472">Membrane</keyword>
<keyword id="KW-1185">Reference proteome</keyword>
<keyword id="KW-0812">Transmembrane</keyword>
<keyword id="KW-1133">Transmembrane helix</keyword>
<proteinExistence type="evidence at transcript level"/>
<organism>
    <name type="scientific">Danio rerio</name>
    <name type="common">Zebrafish</name>
    <name type="synonym">Brachydanio rerio</name>
    <dbReference type="NCBI Taxonomy" id="7955"/>
    <lineage>
        <taxon>Eukaryota</taxon>
        <taxon>Metazoa</taxon>
        <taxon>Chordata</taxon>
        <taxon>Craniata</taxon>
        <taxon>Vertebrata</taxon>
        <taxon>Euteleostomi</taxon>
        <taxon>Actinopterygii</taxon>
        <taxon>Neopterygii</taxon>
        <taxon>Teleostei</taxon>
        <taxon>Ostariophysi</taxon>
        <taxon>Cypriniformes</taxon>
        <taxon>Danionidae</taxon>
        <taxon>Danioninae</taxon>
        <taxon>Danio</taxon>
    </lineage>
</organism>
<accession>Q7ZW11</accession>
<name>TM39B_DANRE</name>
<gene>
    <name evidence="1" type="primary">tmem39b</name>
    <name type="ORF">zgc:55419</name>
</gene>
<sequence>MAGGRRGANRTTYCRSPLSNDTGSVGNGNHSTSSPVTGVRSRTRNGSGTGMSSPPLATQTVVPLKHCKIPELSMDKNVLFELHLFACHLIALFVHYVNIYKTVWWYPPSHPPSHTSLNFHLIDYNMLVFTVIVLARRLIAAIVKEASQSGKLSFPHSVFLVTARFAVLTLAGWSLCRSLIYLFKTYSVLSLLFLCYPFGMYIPFFRLSCDFRRAGSMSPLSGIGSKDVGAAALGRGGRDYLSVLKETWKQHTSQLYSAQPMPTHACCLSPDLIRKEVEYLKMDFNWRMKEVLVSSMLSAYYVAFVPVWFVKSTQYVDKRWSCELFILVSVSTSVILMRHLLPPRYCDLLHKAAAHLGCWQKVDPSLCSNVLQHIWTEEYMWPQGVLVKHSKNVYKAMGHYNVAVPSDVSHYRFYFFFNKPLRILNILIILEGAMIFYQLYSLMCSEKWHQTISLALILFSNYYAFFKLLRDRIVLGKAYSYSASASNQKVS</sequence>
<evidence type="ECO:0000250" key="1">
    <source>
        <dbReference type="UniProtKB" id="Q9GZU3"/>
    </source>
</evidence>
<evidence type="ECO:0000255" key="2"/>
<evidence type="ECO:0000256" key="3">
    <source>
        <dbReference type="SAM" id="MobiDB-lite"/>
    </source>
</evidence>
<evidence type="ECO:0000269" key="4">
    <source>
    </source>
</evidence>
<evidence type="ECO:0000305" key="5"/>
<dbReference type="EMBL" id="BC045334">
    <property type="protein sequence ID" value="AAH45334.1"/>
    <property type="molecule type" value="mRNA"/>
</dbReference>
<dbReference type="RefSeq" id="NP_956154.1">
    <property type="nucleotide sequence ID" value="NM_199860.1"/>
</dbReference>
<dbReference type="FunCoup" id="Q7ZW11">
    <property type="interactions" value="1528"/>
</dbReference>
<dbReference type="STRING" id="7955.ENSDARP00000006893"/>
<dbReference type="GlyCosmos" id="Q7ZW11">
    <property type="glycosylation" value="4 sites, No reported glycans"/>
</dbReference>
<dbReference type="PaxDb" id="7955-ENSDARP00000006893"/>
<dbReference type="Ensembl" id="ENSDART00000002095">
    <property type="protein sequence ID" value="ENSDARP00000006893"/>
    <property type="gene ID" value="ENSDARG00000018956"/>
</dbReference>
<dbReference type="GeneID" id="334110"/>
<dbReference type="KEGG" id="dre:334110"/>
<dbReference type="AGR" id="ZFIN:ZDB-GENE-030131-6042"/>
<dbReference type="CTD" id="55116"/>
<dbReference type="ZFIN" id="ZDB-GENE-030131-6042">
    <property type="gene designation" value="tmem39b"/>
</dbReference>
<dbReference type="eggNOG" id="KOG3828">
    <property type="taxonomic scope" value="Eukaryota"/>
</dbReference>
<dbReference type="HOGENOM" id="CLU_028992_0_0_1"/>
<dbReference type="InParanoid" id="Q7ZW11"/>
<dbReference type="OMA" id="WYQTISL"/>
<dbReference type="OrthoDB" id="438179at2759"/>
<dbReference type="PhylomeDB" id="Q7ZW11"/>
<dbReference type="TreeFam" id="TF321110"/>
<dbReference type="PRO" id="PR:Q7ZW11"/>
<dbReference type="Proteomes" id="UP000000437">
    <property type="component" value="Chromosome 13"/>
</dbReference>
<dbReference type="Bgee" id="ENSDARG00000018956">
    <property type="expression patterns" value="Expressed in mature ovarian follicle and 25 other cell types or tissues"/>
</dbReference>
<dbReference type="GO" id="GO:0005789">
    <property type="term" value="C:endoplasmic reticulum membrane"/>
    <property type="evidence" value="ECO:0000314"/>
    <property type="project" value="UniProtKB"/>
</dbReference>
<dbReference type="GO" id="GO:0016020">
    <property type="term" value="C:membrane"/>
    <property type="evidence" value="ECO:0000318"/>
    <property type="project" value="GO_Central"/>
</dbReference>
<dbReference type="InterPro" id="IPR019397">
    <property type="entry name" value="Uncharacterised_TMEM39"/>
</dbReference>
<dbReference type="PANTHER" id="PTHR12995">
    <property type="entry name" value="FI21814P1"/>
    <property type="match status" value="1"/>
</dbReference>
<dbReference type="PANTHER" id="PTHR12995:SF2">
    <property type="entry name" value="TRANSMEMBRANE PROTEIN 39B"/>
    <property type="match status" value="1"/>
</dbReference>
<dbReference type="Pfam" id="PF10271">
    <property type="entry name" value="Tmp39"/>
    <property type="match status" value="1"/>
</dbReference>
<protein>
    <recommendedName>
        <fullName evidence="1">Transmembrane protein 39B</fullName>
    </recommendedName>
</protein>
<comment type="function">
    <text evidence="4">May protect the cells against DNA damage caused by exposure to the cold-warming stress and facilitates tissue damage repair during the recovery phase.</text>
</comment>
<comment type="subcellular location">
    <subcellularLocation>
        <location evidence="4">Endoplasmic reticulum membrane</location>
        <topology evidence="2">Multi-pass membrane protein</topology>
    </subcellularLocation>
</comment>
<comment type="tissue specificity">
    <text evidence="4">Expressed in the ovary, followed by the intestine and brain.</text>
</comment>
<comment type="disruption phenotype">
    <text evidence="4">Homozygous knockout fish for tmem39b are viable and fertile and seem normal. However, adult males have a significantly lower standard length and body weigh.</text>
</comment>
<comment type="similarity">
    <text evidence="5">Belongs to the TMEM39 family.</text>
</comment>
<feature type="chain" id="PRO_0000279235" description="Transmembrane protein 39B">
    <location>
        <begin position="1"/>
        <end position="491"/>
    </location>
</feature>
<feature type="transmembrane region" description="Helical" evidence="2">
    <location>
        <begin position="79"/>
        <end position="99"/>
    </location>
</feature>
<feature type="transmembrane region" description="Helical" evidence="2">
    <location>
        <begin position="115"/>
        <end position="135"/>
    </location>
</feature>
<feature type="transmembrane region" description="Helical" evidence="2">
    <location>
        <begin position="152"/>
        <end position="172"/>
    </location>
</feature>
<feature type="transmembrane region" description="Helical" evidence="2">
    <location>
        <begin position="185"/>
        <end position="205"/>
    </location>
</feature>
<feature type="transmembrane region" description="Helical" evidence="2">
    <location>
        <begin position="290"/>
        <end position="310"/>
    </location>
</feature>
<feature type="transmembrane region" description="Helical" evidence="2">
    <location>
        <begin position="322"/>
        <end position="342"/>
    </location>
</feature>
<feature type="transmembrane region" description="Helical" evidence="2">
    <location>
        <begin position="423"/>
        <end position="443"/>
    </location>
</feature>
<feature type="transmembrane region" description="Helical" evidence="2">
    <location>
        <begin position="449"/>
        <end position="469"/>
    </location>
</feature>
<feature type="region of interest" description="Disordered" evidence="3">
    <location>
        <begin position="1"/>
        <end position="56"/>
    </location>
</feature>
<feature type="compositionally biased region" description="Polar residues" evidence="3">
    <location>
        <begin position="9"/>
        <end position="36"/>
    </location>
</feature>
<feature type="compositionally biased region" description="Polar residues" evidence="3">
    <location>
        <begin position="44"/>
        <end position="56"/>
    </location>
</feature>
<feature type="glycosylation site" description="N-linked (GlcNAc...) asparagine" evidence="2">
    <location>
        <position position="9"/>
    </location>
</feature>
<feature type="glycosylation site" description="N-linked (GlcNAc...) asparagine" evidence="2">
    <location>
        <position position="20"/>
    </location>
</feature>
<feature type="glycosylation site" description="N-linked (GlcNAc...) asparagine" evidence="2">
    <location>
        <position position="29"/>
    </location>
</feature>
<feature type="glycosylation site" description="N-linked (GlcNAc...) asparagine" evidence="2">
    <location>
        <position position="45"/>
    </location>
</feature>
<reference key="1">
    <citation type="submission" date="2003-01" db="EMBL/GenBank/DDBJ databases">
        <authorList>
            <consortium name="NIH - Zebrafish Gene Collection (ZGC) project"/>
        </authorList>
    </citation>
    <scope>NUCLEOTIDE SEQUENCE [LARGE SCALE MRNA]</scope>
    <source>
        <strain>AB</strain>
    </source>
</reference>
<reference key="2">
    <citation type="journal article" date="2022" name="Int. J. Mol. Sci.">
        <title>Understanding the Function and Mechanism of Zebrafish Tmem39b in Regulating Cold Resistance.</title>
        <authorList>
            <person name="Liu R."/>
            <person name="Long Y."/>
            <person name="Liu R."/>
            <person name="Song G."/>
            <person name="Li Q."/>
            <person name="Yan H."/>
            <person name="Cui Z."/>
        </authorList>
    </citation>
    <scope>SUBCELLULAR LOCATION</scope>
    <scope>TISSUE SPECIFICITY</scope>
    <scope>DISRUPTION PHENOTYPE</scope>
</reference>